<keyword id="KW-0012">Acyltransferase</keyword>
<keyword id="KW-0808">Transferase</keyword>
<accession>Q8GT21</accession>
<organism>
    <name type="scientific">Clarkia breweri</name>
    <name type="common">Fairy fans</name>
    <name type="synonym">Eucharidium breweri</name>
    <dbReference type="NCBI Taxonomy" id="36903"/>
    <lineage>
        <taxon>Eukaryota</taxon>
        <taxon>Viridiplantae</taxon>
        <taxon>Streptophyta</taxon>
        <taxon>Embryophyta</taxon>
        <taxon>Tracheophyta</taxon>
        <taxon>Spermatophyta</taxon>
        <taxon>Magnoliopsida</taxon>
        <taxon>eudicotyledons</taxon>
        <taxon>Gunneridae</taxon>
        <taxon>Pentapetalae</taxon>
        <taxon>rosids</taxon>
        <taxon>malvids</taxon>
        <taxon>Myrtales</taxon>
        <taxon>Onagraceae</taxon>
        <taxon>Onagroideae</taxon>
        <taxon>Onagreae</taxon>
        <taxon>Clarkia</taxon>
    </lineage>
</organism>
<reference key="1">
    <citation type="journal article" date="2002" name="Plant Physiol.">
        <title>Characterization of an acyltransferase capable of synthesizing benzylbenzoate and other volatile esters in flowers and damaged leaves of Clarkia breweri.</title>
        <authorList>
            <person name="D'Auria J.C."/>
            <person name="Chen F."/>
            <person name="Pichersky E."/>
        </authorList>
    </citation>
    <scope>NUCLEOTIDE SEQUENCE [MRNA]</scope>
    <scope>CATALYTIC ACTIVITY</scope>
    <scope>BIOPHYSICOCHEMICAL PROPERTIES</scope>
    <scope>ACTIVITY REGULATION</scope>
    <scope>SUBUNIT</scope>
    <scope>TISSUE SPECIFICITY</scope>
    <scope>DEVELOPMENTAL STAGE</scope>
    <scope>INDUCTION BY WOUNDING</scope>
    <scope>FUNCTION</scope>
</reference>
<protein>
    <recommendedName>
        <fullName>Benzyl alcohol O-benzoyltransferase</fullName>
        <ecNumber>2.3.1.196</ecNumber>
    </recommendedName>
    <alternativeName>
        <fullName>Benzoyl coenzyme A:benzyl alcohol benzoyl transferase</fullName>
    </alternativeName>
</protein>
<feature type="chain" id="PRO_0000409590" description="Benzyl alcohol O-benzoyltransferase">
    <location>
        <begin position="1"/>
        <end position="456"/>
    </location>
</feature>
<feature type="active site" description="Proton acceptor" evidence="1">
    <location>
        <position position="166"/>
    </location>
</feature>
<feature type="active site" description="Proton acceptor" evidence="1">
    <location>
        <position position="380"/>
    </location>
</feature>
<evidence type="ECO:0000255" key="1"/>
<evidence type="ECO:0000269" key="2">
    <source>
    </source>
</evidence>
<evidence type="ECO:0000305" key="3"/>
<proteinExistence type="evidence at protein level"/>
<dbReference type="EC" id="2.3.1.196"/>
<dbReference type="EMBL" id="AF500200">
    <property type="protein sequence ID" value="AAN09796.1"/>
    <property type="molecule type" value="mRNA"/>
</dbReference>
<dbReference type="SMR" id="Q8GT21"/>
<dbReference type="KEGG" id="ag:AAN09796"/>
<dbReference type="BRENDA" id="2.3.1.196">
    <property type="organism ID" value="1437"/>
</dbReference>
<dbReference type="SABIO-RK" id="Q8GT21"/>
<dbReference type="GO" id="GO:0016746">
    <property type="term" value="F:acyltransferase activity"/>
    <property type="evidence" value="ECO:0007669"/>
    <property type="project" value="UniProtKB-KW"/>
</dbReference>
<dbReference type="Gene3D" id="3.30.559.10">
    <property type="entry name" value="Chloramphenicol acetyltransferase-like domain"/>
    <property type="match status" value="2"/>
</dbReference>
<dbReference type="InterPro" id="IPR023213">
    <property type="entry name" value="CAT-like_dom_sf"/>
</dbReference>
<dbReference type="InterPro" id="IPR050898">
    <property type="entry name" value="Plant_acyltransferase"/>
</dbReference>
<dbReference type="PANTHER" id="PTHR31147">
    <property type="entry name" value="ACYL TRANSFERASE 4"/>
    <property type="match status" value="1"/>
</dbReference>
<dbReference type="PANTHER" id="PTHR31147:SF66">
    <property type="entry name" value="OS05G0315700 PROTEIN"/>
    <property type="match status" value="1"/>
</dbReference>
<dbReference type="Pfam" id="PF02458">
    <property type="entry name" value="Transferase"/>
    <property type="match status" value="1"/>
</dbReference>
<name>BEBT_CLABR</name>
<comment type="function">
    <text evidence="2">Probably involved in the formation of benzylbenzoate, a minor constituent of the floral aroma.</text>
</comment>
<comment type="catalytic activity">
    <reaction evidence="2">
        <text>benzyl alcohol + benzoyl-CoA = benzyl benzoate + CoA</text>
        <dbReference type="Rhea" id="RHEA:30411"/>
        <dbReference type="ChEBI" id="CHEBI:17987"/>
        <dbReference type="ChEBI" id="CHEBI:41237"/>
        <dbReference type="ChEBI" id="CHEBI:57287"/>
        <dbReference type="ChEBI" id="CHEBI:57369"/>
        <dbReference type="EC" id="2.3.1.196"/>
    </reaction>
</comment>
<comment type="activity regulation">
    <text evidence="2">Inhibited by magnesium, calcium, cobalt, zinc and copper.</text>
</comment>
<comment type="biophysicochemical properties">
    <kinetics>
        <KM evidence="2">46.8 uM for benzyl alcohol (with benzoyl-CoA as cosubstrate)</KM>
        <KM evidence="2">97.8 uM for cinnamyl alcohol (with benzoyl-CoA as cosubstrate)</KM>
        <KM evidence="2">20.5 uM for benzoyl-CoA (with benzyl alcohol as cosubstrate)</KM>
        <KM evidence="2">464 uM for cinnamoyl-CoA (with benzyl alcohol as cosubstrate)</KM>
        <KM evidence="2">818 uM for acetyl-CoA (with benzyl alcohol as cosubstrate)</KM>
    </kinetics>
    <phDependence>
        <text evidence="2">Optimum pH is 7.7.</text>
    </phDependence>
</comment>
<comment type="subunit">
    <text evidence="2">Monomer.</text>
</comment>
<comment type="tissue specificity">
    <text evidence="2">Highly expressed in stigma. Detected in stamens, sepals, petals and style. Bearly expressed in leaves.</text>
</comment>
<comment type="developmental stage">
    <text evidence="2">Highly expressed in the stigma of unopened flowers, peaks on day 1 postanthesis and drops rapidly on day 2 postanthesis when the stigma becomes receptive (at protein level).</text>
</comment>
<comment type="induction">
    <text evidence="2">Up-regulated by wounding. Expression peaks 6 hours after wonding, decreasing afterward.</text>
</comment>
<comment type="similarity">
    <text evidence="3">Belongs to the plant acyltransferase family.</text>
</comment>
<sequence length="456" mass="50650">MAHDQSLSFEVCRRKPELIRPAKQTPHEFKKLSDVEDQEGLRFQIPVIQFYKHNNESMQERDPVQVIREGIARALVYYYPFAGRLREVDGRKLVVECTGEGVMFIEADADVTLEQFGDALQPPFPCFDQLLFDVPGSGGILDSPLLLIQVTRLKCGSFIFALRLNHTMADAAGIVLFMKAVGEMARGAATPSTLPVWDRHILNARVPPQVTFNHREYEEVKGTIFTPFDDLAHRSFFFGSTEISAMRKQIPPHLRSCSTTIEVLTACLWRCRTLAIKPNPDEEVRMICIVNARSKFNPPLPDGYYGNAFAIPAAVTTAGKLCNNPLGFALELIRKAKREVTEEYMHSVADLMVATGRPHFTVVNTYLVSDVTRAGFGEVDFGWGEAVYGGPAKGGVGVIPGVTSFYIPLRNRQGEKGIVLPICLPSAAMEIFAEALNNTLNGKEIEIAKHFTQSSL</sequence>